<comment type="function">
    <text evidence="1">Plays an essential role in the initiation and regulation of chromosomal replication. ATP-DnaA binds to the origin of replication (oriC) to initiate formation of the DNA replication initiation complex once per cell cycle. Binds the DnaA box (a 9 base pair repeat at the origin) and separates the double-stranded (ds)DNA. Forms a right-handed helical filament on oriC DNA; dsDNA binds to the exterior of the filament while single-stranded (ss)DNA is stabiized in the filament's interior. The ATP-DnaA-oriC complex binds and stabilizes one strand of the AT-rich DNA unwinding element (DUE), permitting loading of DNA polymerase. After initiation quickly degrades to an ADP-DnaA complex that is not apt for DNA replication. Binds acidic phospholipids.</text>
</comment>
<comment type="subunit">
    <text evidence="1">Oligomerizes as a right-handed, spiral filament on DNA at oriC.</text>
</comment>
<comment type="subcellular location">
    <subcellularLocation>
        <location evidence="1">Cytoplasm</location>
    </subcellularLocation>
</comment>
<comment type="domain">
    <text evidence="1">Domain I is involved in oligomerization and binding regulators, domain II is flexibile and of varying length in different bacteria, domain III forms the AAA+ region, while domain IV binds dsDNA.</text>
</comment>
<comment type="similarity">
    <text evidence="1">Belongs to the DnaA family.</text>
</comment>
<evidence type="ECO:0000255" key="1">
    <source>
        <dbReference type="HAMAP-Rule" id="MF_00377"/>
    </source>
</evidence>
<protein>
    <recommendedName>
        <fullName evidence="1">Chromosomal replication initiator protein DnaA</fullName>
    </recommendedName>
</protein>
<gene>
    <name evidence="1" type="primary">dnaA</name>
    <name type="ordered locus">BC_0001</name>
</gene>
<sequence length="446" mass="50434">MENISDLWNSALKELEKKVSKPSYETWLKSTTAHNLKKDVLTITAPNEFARDWLESHYSELISETLYDLTGAKLAIRFIIPQSQAEEDIDLPPVKPNPAQDDSAHLPQSMLNPKYTFDTFVIGSGNRFAHAASLAVAEAPAKAYNPLFIYGGVGLGKTHLMHAIGHYVIEHNPNAKVVYLSSEKFTNEFINSIRDNKAVDFRNKYRNVDVLLIDDIQFLAGKEQTQEEFFHTFNALHEESKQIVISSDRPPKEIPTLEDRLRSRFEWGLITDITPPDLETRIAILRKKAKAEGLDIPNEVMLYIANQIDSNIRELEGALIRVVAYSSLINKDINADLAAEALKDIIPNSKPKIISIYDIQKAVGDVYQVKLEDFKAKKRTKSVAFPRQIAMYLSRELTDSSLPKIGEEFGGRDHTTVIHAHEKISKLLKTDTQLQKQVEEINGILK</sequence>
<dbReference type="EMBL" id="AE016877">
    <property type="protein sequence ID" value="AAP07111.1"/>
    <property type="molecule type" value="Genomic_DNA"/>
</dbReference>
<dbReference type="RefSeq" id="NP_829910.1">
    <property type="nucleotide sequence ID" value="NC_004722.1"/>
</dbReference>
<dbReference type="RefSeq" id="WP_000428017.1">
    <property type="nucleotide sequence ID" value="NZ_CP138336.1"/>
</dbReference>
<dbReference type="SMR" id="Q81JD5"/>
<dbReference type="STRING" id="226900.BC_0001"/>
<dbReference type="KEGG" id="bce:BC0001"/>
<dbReference type="PATRIC" id="fig|226900.8.peg.26"/>
<dbReference type="HOGENOM" id="CLU_026910_3_1_9"/>
<dbReference type="OrthoDB" id="9807019at2"/>
<dbReference type="Proteomes" id="UP000001417">
    <property type="component" value="Chromosome"/>
</dbReference>
<dbReference type="GO" id="GO:0005737">
    <property type="term" value="C:cytoplasm"/>
    <property type="evidence" value="ECO:0007669"/>
    <property type="project" value="UniProtKB-SubCell"/>
</dbReference>
<dbReference type="GO" id="GO:0005886">
    <property type="term" value="C:plasma membrane"/>
    <property type="evidence" value="ECO:0000318"/>
    <property type="project" value="GO_Central"/>
</dbReference>
<dbReference type="GO" id="GO:0005524">
    <property type="term" value="F:ATP binding"/>
    <property type="evidence" value="ECO:0007669"/>
    <property type="project" value="UniProtKB-UniRule"/>
</dbReference>
<dbReference type="GO" id="GO:0016887">
    <property type="term" value="F:ATP hydrolysis activity"/>
    <property type="evidence" value="ECO:0007669"/>
    <property type="project" value="InterPro"/>
</dbReference>
<dbReference type="GO" id="GO:0003688">
    <property type="term" value="F:DNA replication origin binding"/>
    <property type="evidence" value="ECO:0000318"/>
    <property type="project" value="GO_Central"/>
</dbReference>
<dbReference type="GO" id="GO:0008289">
    <property type="term" value="F:lipid binding"/>
    <property type="evidence" value="ECO:0007669"/>
    <property type="project" value="UniProtKB-KW"/>
</dbReference>
<dbReference type="GO" id="GO:0006260">
    <property type="term" value="P:DNA replication"/>
    <property type="evidence" value="ECO:0000318"/>
    <property type="project" value="GO_Central"/>
</dbReference>
<dbReference type="GO" id="GO:0006270">
    <property type="term" value="P:DNA replication initiation"/>
    <property type="evidence" value="ECO:0000318"/>
    <property type="project" value="GO_Central"/>
</dbReference>
<dbReference type="GO" id="GO:0006275">
    <property type="term" value="P:regulation of DNA replication"/>
    <property type="evidence" value="ECO:0007669"/>
    <property type="project" value="UniProtKB-UniRule"/>
</dbReference>
<dbReference type="CDD" id="cd00009">
    <property type="entry name" value="AAA"/>
    <property type="match status" value="1"/>
</dbReference>
<dbReference type="CDD" id="cd06571">
    <property type="entry name" value="Bac_DnaA_C"/>
    <property type="match status" value="1"/>
</dbReference>
<dbReference type="FunFam" id="1.10.1750.10:FF:000003">
    <property type="entry name" value="Chromosomal replication initiator protein DnaA"/>
    <property type="match status" value="1"/>
</dbReference>
<dbReference type="FunFam" id="1.10.8.60:FF:000003">
    <property type="entry name" value="Chromosomal replication initiator protein DnaA"/>
    <property type="match status" value="1"/>
</dbReference>
<dbReference type="FunFam" id="3.30.300.180:FF:000002">
    <property type="entry name" value="Chromosomal replication initiator protein DnaA"/>
    <property type="match status" value="1"/>
</dbReference>
<dbReference type="FunFam" id="3.40.50.300:FF:000150">
    <property type="entry name" value="Chromosomal replication initiator protein DnaA"/>
    <property type="match status" value="1"/>
</dbReference>
<dbReference type="Gene3D" id="1.10.1750.10">
    <property type="match status" value="1"/>
</dbReference>
<dbReference type="Gene3D" id="1.10.8.60">
    <property type="match status" value="1"/>
</dbReference>
<dbReference type="Gene3D" id="3.30.300.180">
    <property type="match status" value="1"/>
</dbReference>
<dbReference type="Gene3D" id="3.40.50.300">
    <property type="entry name" value="P-loop containing nucleotide triphosphate hydrolases"/>
    <property type="match status" value="1"/>
</dbReference>
<dbReference type="HAMAP" id="MF_00377">
    <property type="entry name" value="DnaA_bact"/>
    <property type="match status" value="1"/>
</dbReference>
<dbReference type="InterPro" id="IPR003593">
    <property type="entry name" value="AAA+_ATPase"/>
</dbReference>
<dbReference type="InterPro" id="IPR001957">
    <property type="entry name" value="Chromosome_initiator_DnaA"/>
</dbReference>
<dbReference type="InterPro" id="IPR020591">
    <property type="entry name" value="Chromosome_initiator_DnaA-like"/>
</dbReference>
<dbReference type="InterPro" id="IPR018312">
    <property type="entry name" value="Chromosome_initiator_DnaA_CS"/>
</dbReference>
<dbReference type="InterPro" id="IPR013159">
    <property type="entry name" value="DnaA_C"/>
</dbReference>
<dbReference type="InterPro" id="IPR013317">
    <property type="entry name" value="DnaA_dom"/>
</dbReference>
<dbReference type="InterPro" id="IPR024633">
    <property type="entry name" value="DnaA_N_dom"/>
</dbReference>
<dbReference type="InterPro" id="IPR038454">
    <property type="entry name" value="DnaA_N_sf"/>
</dbReference>
<dbReference type="InterPro" id="IPR027417">
    <property type="entry name" value="P-loop_NTPase"/>
</dbReference>
<dbReference type="InterPro" id="IPR010921">
    <property type="entry name" value="Trp_repressor/repl_initiator"/>
</dbReference>
<dbReference type="NCBIfam" id="TIGR00362">
    <property type="entry name" value="DnaA"/>
    <property type="match status" value="1"/>
</dbReference>
<dbReference type="NCBIfam" id="NF010686">
    <property type="entry name" value="PRK14086.1"/>
    <property type="match status" value="1"/>
</dbReference>
<dbReference type="PANTHER" id="PTHR30050">
    <property type="entry name" value="CHROMOSOMAL REPLICATION INITIATOR PROTEIN DNAA"/>
    <property type="match status" value="1"/>
</dbReference>
<dbReference type="PANTHER" id="PTHR30050:SF2">
    <property type="entry name" value="CHROMOSOMAL REPLICATION INITIATOR PROTEIN DNAA"/>
    <property type="match status" value="1"/>
</dbReference>
<dbReference type="Pfam" id="PF00308">
    <property type="entry name" value="Bac_DnaA"/>
    <property type="match status" value="1"/>
</dbReference>
<dbReference type="Pfam" id="PF08299">
    <property type="entry name" value="Bac_DnaA_C"/>
    <property type="match status" value="1"/>
</dbReference>
<dbReference type="Pfam" id="PF11638">
    <property type="entry name" value="DnaA_N"/>
    <property type="match status" value="1"/>
</dbReference>
<dbReference type="PRINTS" id="PR00051">
    <property type="entry name" value="DNAA"/>
</dbReference>
<dbReference type="SMART" id="SM00382">
    <property type="entry name" value="AAA"/>
    <property type="match status" value="1"/>
</dbReference>
<dbReference type="SMART" id="SM00760">
    <property type="entry name" value="Bac_DnaA_C"/>
    <property type="match status" value="1"/>
</dbReference>
<dbReference type="SUPFAM" id="SSF52540">
    <property type="entry name" value="P-loop containing nucleoside triphosphate hydrolases"/>
    <property type="match status" value="1"/>
</dbReference>
<dbReference type="SUPFAM" id="SSF48295">
    <property type="entry name" value="TrpR-like"/>
    <property type="match status" value="1"/>
</dbReference>
<dbReference type="PROSITE" id="PS01008">
    <property type="entry name" value="DNAA"/>
    <property type="match status" value="1"/>
</dbReference>
<proteinExistence type="inferred from homology"/>
<keyword id="KW-0067">ATP-binding</keyword>
<keyword id="KW-0963">Cytoplasm</keyword>
<keyword id="KW-0235">DNA replication</keyword>
<keyword id="KW-0238">DNA-binding</keyword>
<keyword id="KW-0446">Lipid-binding</keyword>
<keyword id="KW-0547">Nucleotide-binding</keyword>
<keyword id="KW-1185">Reference proteome</keyword>
<feature type="chain" id="PRO_0000114126" description="Chromosomal replication initiator protein DnaA">
    <location>
        <begin position="1"/>
        <end position="446"/>
    </location>
</feature>
<feature type="region of interest" description="Domain I, interacts with DnaA modulators" evidence="1">
    <location>
        <begin position="1"/>
        <end position="81"/>
    </location>
</feature>
<feature type="region of interest" description="Domain II" evidence="1">
    <location>
        <begin position="81"/>
        <end position="109"/>
    </location>
</feature>
<feature type="region of interest" description="Domain III, AAA+ region" evidence="1">
    <location>
        <begin position="110"/>
        <end position="326"/>
    </location>
</feature>
<feature type="region of interest" description="Domain IV, binds dsDNA" evidence="1">
    <location>
        <begin position="327"/>
        <end position="446"/>
    </location>
</feature>
<feature type="binding site" evidence="1">
    <location>
        <position position="154"/>
    </location>
    <ligand>
        <name>ATP</name>
        <dbReference type="ChEBI" id="CHEBI:30616"/>
    </ligand>
</feature>
<feature type="binding site" evidence="1">
    <location>
        <position position="156"/>
    </location>
    <ligand>
        <name>ATP</name>
        <dbReference type="ChEBI" id="CHEBI:30616"/>
    </ligand>
</feature>
<feature type="binding site" evidence="1">
    <location>
        <position position="157"/>
    </location>
    <ligand>
        <name>ATP</name>
        <dbReference type="ChEBI" id="CHEBI:30616"/>
    </ligand>
</feature>
<feature type="binding site" evidence="1">
    <location>
        <position position="158"/>
    </location>
    <ligand>
        <name>ATP</name>
        <dbReference type="ChEBI" id="CHEBI:30616"/>
    </ligand>
</feature>
<name>DNAA_BACCR</name>
<organism>
    <name type="scientific">Bacillus cereus (strain ATCC 14579 / DSM 31 / CCUG 7414 / JCM 2152 / NBRC 15305 / NCIMB 9373 / NCTC 2599 / NRRL B-3711)</name>
    <dbReference type="NCBI Taxonomy" id="226900"/>
    <lineage>
        <taxon>Bacteria</taxon>
        <taxon>Bacillati</taxon>
        <taxon>Bacillota</taxon>
        <taxon>Bacilli</taxon>
        <taxon>Bacillales</taxon>
        <taxon>Bacillaceae</taxon>
        <taxon>Bacillus</taxon>
        <taxon>Bacillus cereus group</taxon>
    </lineage>
</organism>
<accession>Q81JD5</accession>
<reference key="1">
    <citation type="journal article" date="2003" name="Nature">
        <title>Genome sequence of Bacillus cereus and comparative analysis with Bacillus anthracis.</title>
        <authorList>
            <person name="Ivanova N."/>
            <person name="Sorokin A."/>
            <person name="Anderson I."/>
            <person name="Galleron N."/>
            <person name="Candelon B."/>
            <person name="Kapatral V."/>
            <person name="Bhattacharyya A."/>
            <person name="Reznik G."/>
            <person name="Mikhailova N."/>
            <person name="Lapidus A."/>
            <person name="Chu L."/>
            <person name="Mazur M."/>
            <person name="Goltsman E."/>
            <person name="Larsen N."/>
            <person name="D'Souza M."/>
            <person name="Walunas T."/>
            <person name="Grechkin Y."/>
            <person name="Pusch G."/>
            <person name="Haselkorn R."/>
            <person name="Fonstein M."/>
            <person name="Ehrlich S.D."/>
            <person name="Overbeek R."/>
            <person name="Kyrpides N.C."/>
        </authorList>
    </citation>
    <scope>NUCLEOTIDE SEQUENCE [LARGE SCALE GENOMIC DNA]</scope>
    <source>
        <strain>ATCC 14579 / DSM 31 / CCUG 7414 / JCM 2152 / NBRC 15305 / NCIMB 9373 / NCTC 2599 / NRRL B-3711</strain>
    </source>
</reference>